<proteinExistence type="evidence at transcript level"/>
<dbReference type="EMBL" id="CR859637">
    <property type="protein sequence ID" value="CAH91799.1"/>
    <property type="molecule type" value="mRNA"/>
</dbReference>
<dbReference type="RefSeq" id="NP_001126046.1">
    <property type="nucleotide sequence ID" value="NM_001132574.1"/>
</dbReference>
<dbReference type="SMR" id="Q5R8W1"/>
<dbReference type="FunCoup" id="Q5R8W1">
    <property type="interactions" value="1766"/>
</dbReference>
<dbReference type="STRING" id="9601.ENSPPYP00000008609"/>
<dbReference type="GeneID" id="100172995"/>
<dbReference type="KEGG" id="pon:100172995"/>
<dbReference type="CTD" id="54758"/>
<dbReference type="eggNOG" id="KOG1230">
    <property type="taxonomic scope" value="Eukaryota"/>
</dbReference>
<dbReference type="InParanoid" id="Q5R8W1"/>
<dbReference type="OrthoDB" id="4447at2759"/>
<dbReference type="Proteomes" id="UP000001595">
    <property type="component" value="Unplaced"/>
</dbReference>
<dbReference type="Gene3D" id="2.120.10.80">
    <property type="entry name" value="Kelch-type beta propeller"/>
    <property type="match status" value="2"/>
</dbReference>
<dbReference type="InterPro" id="IPR015915">
    <property type="entry name" value="Kelch-typ_b-propeller"/>
</dbReference>
<dbReference type="InterPro" id="IPR052588">
    <property type="entry name" value="Kelch_domain_protein"/>
</dbReference>
<dbReference type="PANTHER" id="PTHR46063">
    <property type="entry name" value="KELCH DOMAIN-CONTAINING PROTEIN"/>
    <property type="match status" value="1"/>
</dbReference>
<dbReference type="PANTHER" id="PTHR46063:SF1">
    <property type="entry name" value="KELCH DOMAIN-CONTAINING PROTEIN 4"/>
    <property type="match status" value="1"/>
</dbReference>
<dbReference type="Pfam" id="PF24681">
    <property type="entry name" value="Kelch_KLHDC2_KLHL20_DRC7"/>
    <property type="match status" value="1"/>
</dbReference>
<dbReference type="SUPFAM" id="SSF117281">
    <property type="entry name" value="Kelch motif"/>
    <property type="match status" value="2"/>
</dbReference>
<name>KLDC4_PONAB</name>
<accession>Q5R8W1</accession>
<keyword id="KW-0880">Kelch repeat</keyword>
<keyword id="KW-0597">Phosphoprotein</keyword>
<keyword id="KW-1185">Reference proteome</keyword>
<keyword id="KW-0677">Repeat</keyword>
<sequence length="522" mass="58231">MGKKGKKEKKGRGAEKTAAKMEKKVSKRSRKEEEDLEALIAHFQTLDAKRTQTVEAPCPPPSPRLNASLSVHPEKDELILFGGEYFNGQKTFLYNELYVYNIRKDTWTKVDIPSPPPRRCAHQAVVVPQGGGQLWVFGGEFASPNGEQFYHYKDLWVLHLATKTWEQVKSTGSPSGRSGHRMVAWKRQLILFGGFHESTRDYIYYNDVYTFNLDTFTWSKLSPSGTGPTPRSGCQMSVTPQGGIIIYGGYSKQRVKKDVDRGTRHSDMFLLKPEDGREDKWVWTRMNPSGVKPTPRSGFSAAMALNHQTLFFGGVCDEEEEESLAGEFFNDLYFYDATRNRWFEGQLKGPKSEKKKRRRGRKEESEGGSKLACGGAGTQGPVQVVKEVVAEDGTVVTIKQVLAAPGSAGQPRSEDEDSPEEAGSSAPGPCPRSNAMLAVKHGVLYVYGGMFEAGDRQVTLSDLHCLDLHRMEAWKALVEMDPETQEWLEETDSEEDSEEVEGAEGGDEDEDEDSREESGAED</sequence>
<reference key="1">
    <citation type="submission" date="2004-11" db="EMBL/GenBank/DDBJ databases">
        <authorList>
            <consortium name="The German cDNA consortium"/>
        </authorList>
    </citation>
    <scope>NUCLEOTIDE SEQUENCE [LARGE SCALE MRNA]</scope>
    <source>
        <tissue>Kidney</tissue>
    </source>
</reference>
<protein>
    <recommendedName>
        <fullName>Kelch domain-containing protein 4</fullName>
    </recommendedName>
</protein>
<evidence type="ECO:0000250" key="1">
    <source>
        <dbReference type="UniProtKB" id="Q8TBB5"/>
    </source>
</evidence>
<evidence type="ECO:0000256" key="2">
    <source>
        <dbReference type="SAM" id="MobiDB-lite"/>
    </source>
</evidence>
<gene>
    <name type="primary">KLHDC4</name>
</gene>
<feature type="chain" id="PRO_0000286397" description="Kelch domain-containing protein 4">
    <location>
        <begin position="1"/>
        <end position="522"/>
    </location>
</feature>
<feature type="repeat" description="Kelch 1">
    <location>
        <begin position="77"/>
        <end position="129"/>
    </location>
</feature>
<feature type="repeat" description="Kelch 2">
    <location>
        <begin position="133"/>
        <end position="187"/>
    </location>
</feature>
<feature type="repeat" description="Kelch 3">
    <location>
        <begin position="188"/>
        <end position="241"/>
    </location>
</feature>
<feature type="repeat" description="Kelch 4">
    <location>
        <begin position="243"/>
        <end position="289"/>
    </location>
</feature>
<feature type="repeat" description="Kelch 5">
    <location>
        <begin position="308"/>
        <end position="361"/>
    </location>
</feature>
<feature type="repeat" description="Kelch 6">
    <location>
        <begin position="443"/>
        <end position="494"/>
    </location>
</feature>
<feature type="region of interest" description="Disordered" evidence="2">
    <location>
        <begin position="1"/>
        <end position="33"/>
    </location>
</feature>
<feature type="region of interest" description="Disordered" evidence="2">
    <location>
        <begin position="346"/>
        <end position="378"/>
    </location>
</feature>
<feature type="region of interest" description="Disordered" evidence="2">
    <location>
        <begin position="402"/>
        <end position="432"/>
    </location>
</feature>
<feature type="region of interest" description="Disordered" evidence="2">
    <location>
        <begin position="481"/>
        <end position="522"/>
    </location>
</feature>
<feature type="compositionally biased region" description="Basic residues" evidence="2">
    <location>
        <begin position="1"/>
        <end position="10"/>
    </location>
</feature>
<feature type="compositionally biased region" description="Basic and acidic residues" evidence="2">
    <location>
        <begin position="11"/>
        <end position="24"/>
    </location>
</feature>
<feature type="modified residue" description="Phosphoserine" evidence="1">
    <location>
        <position position="413"/>
    </location>
</feature>
<feature type="modified residue" description="Phosphoserine" evidence="1">
    <location>
        <position position="418"/>
    </location>
</feature>
<organism>
    <name type="scientific">Pongo abelii</name>
    <name type="common">Sumatran orangutan</name>
    <name type="synonym">Pongo pygmaeus abelii</name>
    <dbReference type="NCBI Taxonomy" id="9601"/>
    <lineage>
        <taxon>Eukaryota</taxon>
        <taxon>Metazoa</taxon>
        <taxon>Chordata</taxon>
        <taxon>Craniata</taxon>
        <taxon>Vertebrata</taxon>
        <taxon>Euteleostomi</taxon>
        <taxon>Mammalia</taxon>
        <taxon>Eutheria</taxon>
        <taxon>Euarchontoglires</taxon>
        <taxon>Primates</taxon>
        <taxon>Haplorrhini</taxon>
        <taxon>Catarrhini</taxon>
        <taxon>Hominidae</taxon>
        <taxon>Pongo</taxon>
    </lineage>
</organism>